<sequence>MAEDADMRNELEEMQRRADQLADESLESTRRMLQLVEESKDAGIRTLVMLDEQGEQLERIEEGMDQINKDMKEAEKNLTDLGKFCGLCVCPCNKLKSSDAYKKAWGNNQDGVVASQPARVVDEREQMAISGGFIRRVTNDARENEMDENLEQVSGIIGNLRHMALDMGNEIDTQNRQIDRIMEKADSNKTRIDEANQRATKMLGSG</sequence>
<accession>P60879</accession>
<accession>A2AIC2</accession>
<accession>A2AIC3</accession>
<accession>P13795</accession>
<accession>P36974</accession>
<accession>P70557</accession>
<accession>P70558</accession>
<accession>Q8IXK3</accession>
<accession>Q96FM2</accession>
<accession>Q9BR45</accession>
<feature type="chain" id="PRO_0000213589" description="Synaptosomal-associated protein 25">
    <location>
        <begin position="1"/>
        <end position="206"/>
    </location>
</feature>
<feature type="domain" description="t-SNARE coiled-coil homology 1" evidence="3">
    <location>
        <begin position="19"/>
        <end position="81"/>
    </location>
</feature>
<feature type="domain" description="t-SNARE coiled-coil homology 2" evidence="3">
    <location>
        <begin position="140"/>
        <end position="202"/>
    </location>
</feature>
<feature type="region of interest" description="Interaction with CENPF" evidence="9">
    <location>
        <begin position="1"/>
        <end position="75"/>
    </location>
</feature>
<feature type="region of interest" description="Disordered" evidence="4">
    <location>
        <begin position="1"/>
        <end position="23"/>
    </location>
</feature>
<feature type="region of interest" description="Interaction with ZDHHC17" evidence="1">
    <location>
        <begin position="111"/>
        <end position="120"/>
    </location>
</feature>
<feature type="compositionally biased region" description="Basic and acidic residues" evidence="4">
    <location>
        <begin position="1"/>
        <end position="20"/>
    </location>
</feature>
<feature type="site" description="(Microbial infection) Cleavage; by C.botulinum neurotoxin type E (BoNT/E)" evidence="24 32">
    <location>
        <begin position="180"/>
        <end position="181"/>
    </location>
</feature>
<feature type="site" description="(Microbial infection) Cleavage; by C.botulinum neurotoxin type A (BoNT/A, botA)" evidence="24 32">
    <location>
        <begin position="197"/>
        <end position="198"/>
    </location>
</feature>
<feature type="modified residue" description="Phosphothreonine; by PKC and PKA" evidence="7 34">
    <location>
        <position position="138"/>
    </location>
</feature>
<feature type="modified residue" description="Phosphoserine" evidence="34">
    <location>
        <position position="154"/>
    </location>
</feature>
<feature type="modified residue" description="Phosphoserine; by PKC" evidence="7">
    <location>
        <position position="187"/>
    </location>
</feature>
<feature type="lipid moiety-binding region" description="S-palmitoyl cysteine" evidence="25">
    <location>
        <position position="85"/>
    </location>
</feature>
<feature type="lipid moiety-binding region" description="S-palmitoyl cysteine" evidence="25">
    <location>
        <position position="88"/>
    </location>
</feature>
<feature type="lipid moiety-binding region" description="S-palmitoyl cysteine" evidence="25">
    <location>
        <position position="90"/>
    </location>
</feature>
<feature type="lipid moiety-binding region" description="S-palmitoyl cysteine" evidence="25">
    <location>
        <position position="92"/>
    </location>
</feature>
<feature type="splice variant" id="VSP_010019" description="In isoform 2." evidence="27 28 29">
    <original>ERIEEGMDQINKDMKEAEKNLTDLGKFCGLCV</original>
    <variation>DRVEEGMNHINQDMKEAEKNLKDLGKCCGLFI</variation>
    <location>
        <begin position="58"/>
        <end position="89"/>
    </location>
</feature>
<feature type="mutagenesis site" description="91% reduction in palmitoylation level. 14% membrane association. No palmitoylation and less than 8% membrane association; when associated with S-88 or A-88." evidence="25">
    <original>C</original>
    <variation>S</variation>
    <location>
        <position position="85"/>
    </location>
</feature>
<feature type="mutagenesis site" description="79% reduction in palmitoylation level. 18% membrane association. No palmitoylation and less than 8% membrane association; when associated with S-85 or A-85." evidence="25">
    <original>C</original>
    <variation>S</variation>
    <location>
        <position position="88"/>
    </location>
</feature>
<feature type="mutagenesis site" description="58% reduction in palmitoylation level. 28% membrane association. Very little palmitoylation and less than 8% membrane association; when associated with S-92 or A-92." evidence="25">
    <original>C</original>
    <variation>S</variation>
    <location>
        <position position="90"/>
    </location>
</feature>
<feature type="mutagenesis site" description="65% reduction in palmitoylation level. 29% membrane association. No palmitoylation and less than 8% membrane association; when associated with S-90 or A-90." evidence="25">
    <original>C</original>
    <variation>S</variation>
    <location>
        <position position="92"/>
    </location>
</feature>
<reference key="1">
    <citation type="journal article" date="1989" name="J. Cell Biol.">
        <title>The identification of a novel synaptosomal-associated protein, SNAP-25, differentially expressed by neuronal subpopulations.</title>
        <authorList>
            <person name="Oyler G.A."/>
            <person name="Higgins G.A."/>
            <person name="Hart R.A."/>
            <person name="Battenberg E."/>
            <person name="Billingsley M."/>
            <person name="Bloom F.E."/>
            <person name="Wilson M.C."/>
        </authorList>
    </citation>
    <scope>NUCLEOTIDE SEQUENCE [MRNA] (ISOFORM 2)</scope>
    <scope>SUBCELLULAR LOCATION</scope>
    <source>
        <strain>BALB/cJ</strain>
    </source>
</reference>
<reference key="2">
    <citation type="journal article" date="2001" name="Mamm. Genome">
        <title>High-throughput sequence identification of gene coding variants within alcohol-related QTLs.</title>
        <authorList>
            <person name="Ehringer M.A."/>
            <person name="Thompson J."/>
            <person name="Conroy O."/>
            <person name="Xu Y."/>
            <person name="Yang F."/>
            <person name="Canniff J."/>
            <person name="Beeson M."/>
            <person name="Gordon L."/>
            <person name="Bennett B."/>
            <person name="Johnson T.E."/>
            <person name="Sikela J.M."/>
        </authorList>
    </citation>
    <scope>NUCLEOTIDE SEQUENCE [MRNA] (ISOFORM 2)</scope>
    <source>
        <strain>ILS</strain>
        <strain>ISS</strain>
    </source>
</reference>
<reference key="3">
    <citation type="journal article" date="2005" name="Science">
        <title>The transcriptional landscape of the mammalian genome.</title>
        <authorList>
            <person name="Carninci P."/>
            <person name="Kasukawa T."/>
            <person name="Katayama S."/>
            <person name="Gough J."/>
            <person name="Frith M.C."/>
            <person name="Maeda N."/>
            <person name="Oyama R."/>
            <person name="Ravasi T."/>
            <person name="Lenhard B."/>
            <person name="Wells C."/>
            <person name="Kodzius R."/>
            <person name="Shimokawa K."/>
            <person name="Bajic V.B."/>
            <person name="Brenner S.E."/>
            <person name="Batalov S."/>
            <person name="Forrest A.R."/>
            <person name="Zavolan M."/>
            <person name="Davis M.J."/>
            <person name="Wilming L.G."/>
            <person name="Aidinis V."/>
            <person name="Allen J.E."/>
            <person name="Ambesi-Impiombato A."/>
            <person name="Apweiler R."/>
            <person name="Aturaliya R.N."/>
            <person name="Bailey T.L."/>
            <person name="Bansal M."/>
            <person name="Baxter L."/>
            <person name="Beisel K.W."/>
            <person name="Bersano T."/>
            <person name="Bono H."/>
            <person name="Chalk A.M."/>
            <person name="Chiu K.P."/>
            <person name="Choudhary V."/>
            <person name="Christoffels A."/>
            <person name="Clutterbuck D.R."/>
            <person name="Crowe M.L."/>
            <person name="Dalla E."/>
            <person name="Dalrymple B.P."/>
            <person name="de Bono B."/>
            <person name="Della Gatta G."/>
            <person name="di Bernardo D."/>
            <person name="Down T."/>
            <person name="Engstrom P."/>
            <person name="Fagiolini M."/>
            <person name="Faulkner G."/>
            <person name="Fletcher C.F."/>
            <person name="Fukushima T."/>
            <person name="Furuno M."/>
            <person name="Futaki S."/>
            <person name="Gariboldi M."/>
            <person name="Georgii-Hemming P."/>
            <person name="Gingeras T.R."/>
            <person name="Gojobori T."/>
            <person name="Green R.E."/>
            <person name="Gustincich S."/>
            <person name="Harbers M."/>
            <person name="Hayashi Y."/>
            <person name="Hensch T.K."/>
            <person name="Hirokawa N."/>
            <person name="Hill D."/>
            <person name="Huminiecki L."/>
            <person name="Iacono M."/>
            <person name="Ikeo K."/>
            <person name="Iwama A."/>
            <person name="Ishikawa T."/>
            <person name="Jakt M."/>
            <person name="Kanapin A."/>
            <person name="Katoh M."/>
            <person name="Kawasawa Y."/>
            <person name="Kelso J."/>
            <person name="Kitamura H."/>
            <person name="Kitano H."/>
            <person name="Kollias G."/>
            <person name="Krishnan S.P."/>
            <person name="Kruger A."/>
            <person name="Kummerfeld S.K."/>
            <person name="Kurochkin I.V."/>
            <person name="Lareau L.F."/>
            <person name="Lazarevic D."/>
            <person name="Lipovich L."/>
            <person name="Liu J."/>
            <person name="Liuni S."/>
            <person name="McWilliam S."/>
            <person name="Madan Babu M."/>
            <person name="Madera M."/>
            <person name="Marchionni L."/>
            <person name="Matsuda H."/>
            <person name="Matsuzawa S."/>
            <person name="Miki H."/>
            <person name="Mignone F."/>
            <person name="Miyake S."/>
            <person name="Morris K."/>
            <person name="Mottagui-Tabar S."/>
            <person name="Mulder N."/>
            <person name="Nakano N."/>
            <person name="Nakauchi H."/>
            <person name="Ng P."/>
            <person name="Nilsson R."/>
            <person name="Nishiguchi S."/>
            <person name="Nishikawa S."/>
            <person name="Nori F."/>
            <person name="Ohara O."/>
            <person name="Okazaki Y."/>
            <person name="Orlando V."/>
            <person name="Pang K.C."/>
            <person name="Pavan W.J."/>
            <person name="Pavesi G."/>
            <person name="Pesole G."/>
            <person name="Petrovsky N."/>
            <person name="Piazza S."/>
            <person name="Reed J."/>
            <person name="Reid J.F."/>
            <person name="Ring B.Z."/>
            <person name="Ringwald M."/>
            <person name="Rost B."/>
            <person name="Ruan Y."/>
            <person name="Salzberg S.L."/>
            <person name="Sandelin A."/>
            <person name="Schneider C."/>
            <person name="Schoenbach C."/>
            <person name="Sekiguchi K."/>
            <person name="Semple C.A."/>
            <person name="Seno S."/>
            <person name="Sessa L."/>
            <person name="Sheng Y."/>
            <person name="Shibata Y."/>
            <person name="Shimada H."/>
            <person name="Shimada K."/>
            <person name="Silva D."/>
            <person name="Sinclair B."/>
            <person name="Sperling S."/>
            <person name="Stupka E."/>
            <person name="Sugiura K."/>
            <person name="Sultana R."/>
            <person name="Takenaka Y."/>
            <person name="Taki K."/>
            <person name="Tammoja K."/>
            <person name="Tan S.L."/>
            <person name="Tang S."/>
            <person name="Taylor M.S."/>
            <person name="Tegner J."/>
            <person name="Teichmann S.A."/>
            <person name="Ueda H.R."/>
            <person name="van Nimwegen E."/>
            <person name="Verardo R."/>
            <person name="Wei C.L."/>
            <person name="Yagi K."/>
            <person name="Yamanishi H."/>
            <person name="Zabarovsky E."/>
            <person name="Zhu S."/>
            <person name="Zimmer A."/>
            <person name="Hide W."/>
            <person name="Bult C."/>
            <person name="Grimmond S.M."/>
            <person name="Teasdale R.D."/>
            <person name="Liu E.T."/>
            <person name="Brusic V."/>
            <person name="Quackenbush J."/>
            <person name="Wahlestedt C."/>
            <person name="Mattick J.S."/>
            <person name="Hume D.A."/>
            <person name="Kai C."/>
            <person name="Sasaki D."/>
            <person name="Tomaru Y."/>
            <person name="Fukuda S."/>
            <person name="Kanamori-Katayama M."/>
            <person name="Suzuki M."/>
            <person name="Aoki J."/>
            <person name="Arakawa T."/>
            <person name="Iida J."/>
            <person name="Imamura K."/>
            <person name="Itoh M."/>
            <person name="Kato T."/>
            <person name="Kawaji H."/>
            <person name="Kawagashira N."/>
            <person name="Kawashima T."/>
            <person name="Kojima M."/>
            <person name="Kondo S."/>
            <person name="Konno H."/>
            <person name="Nakano K."/>
            <person name="Ninomiya N."/>
            <person name="Nishio T."/>
            <person name="Okada M."/>
            <person name="Plessy C."/>
            <person name="Shibata K."/>
            <person name="Shiraki T."/>
            <person name="Suzuki S."/>
            <person name="Tagami M."/>
            <person name="Waki K."/>
            <person name="Watahiki A."/>
            <person name="Okamura-Oho Y."/>
            <person name="Suzuki H."/>
            <person name="Kawai J."/>
            <person name="Hayashizaki Y."/>
        </authorList>
    </citation>
    <scope>NUCLEOTIDE SEQUENCE [LARGE SCALE MRNA] (ISOFORM 1)</scope>
    <source>
        <strain>C57BL/6J</strain>
        <tissue>Medulla oblongata</tissue>
    </source>
</reference>
<reference key="4">
    <citation type="journal article" date="2009" name="PLoS Biol.">
        <title>Lineage-specific biology revealed by a finished genome assembly of the mouse.</title>
        <authorList>
            <person name="Church D.M."/>
            <person name="Goodstadt L."/>
            <person name="Hillier L.W."/>
            <person name="Zody M.C."/>
            <person name="Goldstein S."/>
            <person name="She X."/>
            <person name="Bult C.J."/>
            <person name="Agarwala R."/>
            <person name="Cherry J.L."/>
            <person name="DiCuccio M."/>
            <person name="Hlavina W."/>
            <person name="Kapustin Y."/>
            <person name="Meric P."/>
            <person name="Maglott D."/>
            <person name="Birtle Z."/>
            <person name="Marques A.C."/>
            <person name="Graves T."/>
            <person name="Zhou S."/>
            <person name="Teague B."/>
            <person name="Potamousis K."/>
            <person name="Churas C."/>
            <person name="Place M."/>
            <person name="Herschleb J."/>
            <person name="Runnheim R."/>
            <person name="Forrest D."/>
            <person name="Amos-Landgraf J."/>
            <person name="Schwartz D.C."/>
            <person name="Cheng Z."/>
            <person name="Lindblad-Toh K."/>
            <person name="Eichler E.E."/>
            <person name="Ponting C.P."/>
        </authorList>
    </citation>
    <scope>NUCLEOTIDE SEQUENCE [LARGE SCALE GENOMIC DNA]</scope>
    <source>
        <strain>C57BL/6J</strain>
    </source>
</reference>
<reference key="5">
    <citation type="submission" date="2005-07" db="EMBL/GenBank/DDBJ databases">
        <authorList>
            <person name="Mural R.J."/>
            <person name="Adams M.D."/>
            <person name="Myers E.W."/>
            <person name="Smith H.O."/>
            <person name="Venter J.C."/>
        </authorList>
    </citation>
    <scope>NUCLEOTIDE SEQUENCE [LARGE SCALE GENOMIC DNA]</scope>
</reference>
<reference key="6">
    <citation type="journal article" date="2004" name="Genome Res.">
        <title>The status, quality, and expansion of the NIH full-length cDNA project: the Mammalian Gene Collection (MGC).</title>
        <authorList>
            <consortium name="The MGC Project Team"/>
        </authorList>
    </citation>
    <scope>NUCLEOTIDE SEQUENCE [LARGE SCALE MRNA] (ISOFORM 2)</scope>
    <source>
        <strain>C57BL/6J</strain>
        <tissue>Eye</tissue>
    </source>
</reference>
<reference key="7">
    <citation type="submission" date="2007-04" db="UniProtKB">
        <authorList>
            <person name="Lubec G."/>
            <person name="Kang S.U."/>
        </authorList>
    </citation>
    <scope>PROTEIN SEQUENCE OF 18-31; 60-72; 125-135 AND 143-176</scope>
    <scope>IDENTIFICATION BY MASS SPECTROMETRY</scope>
    <source>
        <strain>C57BL/6J</strain>
        <tissue>Brain</tissue>
    </source>
</reference>
<reference key="8">
    <citation type="journal article" date="1993" name="FEBS Lett.">
        <title>Botulinum neurotoxins serotypes A and E cleave SNAP-25 at distinct COOH-terminal peptide bonds.</title>
        <authorList>
            <person name="Schiavo G."/>
            <person name="Santtuci A."/>
            <person name="Dasgupta B.R."/>
            <person name="Mehta P.P."/>
            <person name="Jontes J."/>
            <person name="Benfenati F."/>
            <person name="Wilson M.C."/>
            <person name="Montecucco C."/>
        </authorList>
    </citation>
    <scope>FUNCTION</scope>
    <scope>PROTEOLYTIC CLEAVAGE (MICROBIAL INFECTION) BY C.BOTULINUM NEUROTOXIN TYPES A AND E</scope>
</reference>
<reference key="9">
    <citation type="journal article" date="1997" name="J. Neurochem.">
        <title>Characterization of the palmitoylation domain of SNAP-25.</title>
        <authorList>
            <person name="Lane S.R."/>
            <person name="Liu Y."/>
        </authorList>
    </citation>
    <scope>PALMITOYLATION AT CYS-85; CYS-88; CYS-90 AND CYS-92</scope>
    <scope>MUTAGENESIS OF CYS-85; CYS-88; CYS-90 AND CYS-92</scope>
    <scope>SUBCELLULAR LOCATION</scope>
</reference>
<reference key="10">
    <citation type="journal article" date="1993" name="Nature">
        <title>Botulinum neurotoxin A selectively cleaves the synaptic protein SNAP-25.</title>
        <authorList>
            <person name="Blasi J."/>
            <person name="Chapman E.R."/>
            <person name="Link E."/>
            <person name="Binz T."/>
            <person name="Yamasaki S."/>
            <person name="De Camilli P."/>
            <person name="Suedhof T.C."/>
            <person name="Niemann H."/>
            <person name="Jahn R."/>
        </authorList>
    </citation>
    <scope>FUNCTION</scope>
    <scope>PROTEOLYTIC CLEAVAGE (MICROBIAL INFECTION) BY C.BOTULINUM NEUROTOXIN TYPES A AND E</scope>
</reference>
<reference key="11">
    <citation type="journal article" date="1999" name="J. Cell Sci.">
        <title>Functional characterisation of tetanus and botulinum neurotoxins binding domains.</title>
        <authorList>
            <person name="Lalli G."/>
            <person name="Herreros J."/>
            <person name="Osborne S.L."/>
            <person name="Montecucco C."/>
            <person name="Rossetto O."/>
            <person name="Schiavo G."/>
        </authorList>
    </citation>
    <scope>SUBCELLULAR LOCATION</scope>
    <scope>PROTEOLYTIC CLEAVAGE (MICROBIAL INFECTION) BY C.BOTULINUM NEUROTOXIN TYPES A AND E</scope>
</reference>
<reference key="12">
    <citation type="journal article" date="1999" name="Nat. Neurosci.">
        <title>Snapin: a SNARE-associated protein implicated in synaptic transmission.</title>
        <authorList>
            <person name="Ilardi J.M."/>
            <person name="Mochida S."/>
            <person name="Sheng Z.-H."/>
        </authorList>
    </citation>
    <scope>INTERACTION WITH SNAPIN</scope>
</reference>
<reference key="13">
    <citation type="journal article" date="2002" name="FEBS Lett.">
        <title>Differential phosphorylation of SNAP-25 in vivo by protein kinase C and protein kinase A.</title>
        <authorList>
            <person name="Hepp R."/>
            <person name="Cabaniols J.-P."/>
            <person name="Roche P.A."/>
        </authorList>
    </citation>
    <scope>PHOSPHORYLATION AT THR-138 AND SER-187</scope>
</reference>
<reference key="14">
    <citation type="journal article" date="2004" name="J. Biol. Chem.">
        <title>SV2B regulates synaptotagmin 1 by direct interaction.</title>
        <authorList>
            <person name="Lazzell D.R."/>
            <person name="Belizaire R."/>
            <person name="Thakur P."/>
            <person name="Sherry D.M."/>
            <person name="Janz R."/>
        </authorList>
    </citation>
    <scope>INTERACTION WITH SYT1; SV2B AND SYNTAXIN-1</scope>
</reference>
<reference key="15">
    <citation type="journal article" date="2006" name="Cell">
        <title>Otoferlin, defective in a human deafness form, is essential for exocytosis at the auditory ribbon synapse.</title>
        <authorList>
            <person name="Roux I."/>
            <person name="Safieddine S."/>
            <person name="Nouvian R."/>
            <person name="Grati M."/>
            <person name="Simmler M.-C."/>
            <person name="Bahloul A."/>
            <person name="Perfettini I."/>
            <person name="Le Gall M."/>
            <person name="Rostaing P."/>
            <person name="Hamard G."/>
            <person name="Triller A."/>
            <person name="Avan P."/>
            <person name="Moser T."/>
            <person name="Petit C."/>
        </authorList>
    </citation>
    <scope>INTERACTION WITH OTOF</scope>
    <source>
        <strain>BALB/cJ</strain>
        <tissue>Cochlea</tissue>
    </source>
</reference>
<reference key="16">
    <citation type="journal article" date="2006" name="Mol. Biol. Cell">
        <title>CytLEK1 is a regulator of plasma membrane recycling through its interaction with SNAP-25.</title>
        <authorList>
            <person name="Pooley R.D."/>
            <person name="Reddy S."/>
            <person name="Soukoulis V."/>
            <person name="Roland J.T."/>
            <person name="Goldenring J.R."/>
            <person name="Bader D.M."/>
        </authorList>
    </citation>
    <scope>FUNCTION</scope>
    <scope>SUBCELLULAR LOCATION</scope>
    <scope>INTERACTION WITH CENPF</scope>
</reference>
<reference key="17">
    <citation type="journal article" date="2009" name="J. Neurochem.">
        <title>Sept8 controls the binding of vesicle-associated membrane protein 2 to synaptophysin.</title>
        <authorList>
            <person name="Ito H."/>
            <person name="Atsuzawa K."/>
            <person name="Morishita R."/>
            <person name="Usuda N."/>
            <person name="Sudo K."/>
            <person name="Iwamoto I."/>
            <person name="Mizutani K."/>
            <person name="Katoh-Semba R."/>
            <person name="Nozawa Y."/>
            <person name="Asano T."/>
            <person name="Nagata K."/>
        </authorList>
    </citation>
    <scope>INTERACTION WITH VAMP2</scope>
</reference>
<reference key="18">
    <citation type="journal article" date="2010" name="Cell">
        <title>A tissue-specific atlas of mouse protein phosphorylation and expression.</title>
        <authorList>
            <person name="Huttlin E.L."/>
            <person name="Jedrychowski M.P."/>
            <person name="Elias J.E."/>
            <person name="Goswami T."/>
            <person name="Rad R."/>
            <person name="Beausoleil S.A."/>
            <person name="Villen J."/>
            <person name="Haas W."/>
            <person name="Sowa M.E."/>
            <person name="Gygi S.P."/>
        </authorList>
    </citation>
    <scope>PHOSPHORYLATION [LARGE SCALE ANALYSIS] AT THR-138 AND SER-154</scope>
    <scope>IDENTIFICATION BY MASS SPECTROMETRY [LARGE SCALE ANALYSIS]</scope>
    <source>
        <tissue>Brain</tissue>
        <tissue>Brown adipose tissue</tissue>
    </source>
</reference>
<reference key="19">
    <citation type="journal article" date="2010" name="Fertil. Steril.">
        <title>Acrosome formation-associated factor is involved in fertilization.</title>
        <authorList>
            <person name="Hu X.Q."/>
            <person name="Ji S.Y."/>
            <person name="Li Y.C."/>
            <person name="Fan C.H."/>
            <person name="Cai H."/>
            <person name="Yang J.L."/>
            <person name="Zhang C.P."/>
            <person name="Chen M."/>
            <person name="Pan Z.F."/>
            <person name="Hu Z.Y."/>
            <person name="Gao F."/>
            <person name="Liu Y.X."/>
        </authorList>
    </citation>
    <scope>INTERACTION WITH EQTN</scope>
</reference>
<reference key="20">
    <citation type="journal article" date="2010" name="Mol. Psychiatry">
        <title>The dysbindin-containing complex (BLOC-1) in brain: developmental regulation, interaction with SNARE proteins and role in neurite outgrowth.</title>
        <authorList>
            <person name="Ghiani C.A."/>
            <person name="Starcevic M."/>
            <person name="Rodriguez-Fernandez I.A."/>
            <person name="Nazarian R."/>
            <person name="Cheli V.T."/>
            <person name="Chan L.N."/>
            <person name="Malvar J.S."/>
            <person name="de Vellis J."/>
            <person name="Sabatti C."/>
            <person name="Dell'Angelica E.C."/>
        </authorList>
    </citation>
    <scope>ASSOCIATION WITH THE BLOC-1 COMPLEX</scope>
    <scope>SUBCELLULAR LOCATION</scope>
    <scope>INTERACTION WITH BLOC1S6</scope>
</reference>
<reference key="21">
    <citation type="journal article" date="2010" name="Science">
        <title>Alpha-synuclein promotes SNARE-complex assembly in vivo and in vitro.</title>
        <authorList>
            <person name="Burre J."/>
            <person name="Sharma M."/>
            <person name="Tsetsenis T."/>
            <person name="Buchman V."/>
            <person name="Etherton M.R."/>
            <person name="Suedhof T.C."/>
        </authorList>
    </citation>
    <scope>INTERACTION WITH ALPHA-SYNUCLEIN/SNCA</scope>
</reference>
<reference key="22">
    <citation type="journal article" date="2011" name="FASEB J.">
        <title>A charged prominence in the linker domain of the cysteine-string protein Cspalpha mediates its regulated interaction with the calcium sensor synaptotagmin 9 during exocytosis.</title>
        <authorList>
            <person name="Boal F."/>
            <person name="Laguerre M."/>
            <person name="Milochau A."/>
            <person name="Lang J."/>
            <person name="Scotti P.A."/>
        </authorList>
    </citation>
    <scope>INTERACTION WITH SYT9 AND HSC70</scope>
</reference>
<reference key="23">
    <citation type="journal article" date="2012" name="Cell Rep.">
        <title>Mutations in the gene PRRT2 cause paroxysmal kinesigenic dyskinesia with infantile convulsions.</title>
        <authorList>
            <person name="Lee H.Y."/>
            <person name="Huang Y."/>
            <person name="Bruneau N."/>
            <person name="Roll P."/>
            <person name="Roberson E.D."/>
            <person name="Hermann M."/>
            <person name="Quinn E."/>
            <person name="Maas J."/>
            <person name="Edwards R."/>
            <person name="Ashizawa T."/>
            <person name="Baykan B."/>
            <person name="Bhatia K."/>
            <person name="Bressman S."/>
            <person name="Bruno M.K."/>
            <person name="Brunt E.R."/>
            <person name="Caraballo R."/>
            <person name="Echenne B."/>
            <person name="Fejerman N."/>
            <person name="Frucht S."/>
            <person name="Gurnett C.A."/>
            <person name="Hirsch E."/>
            <person name="Houlden H."/>
            <person name="Jankovic J."/>
            <person name="Lee W.L."/>
            <person name="Lynch D.R."/>
            <person name="Mohammed S."/>
            <person name="Mueller U."/>
            <person name="Nespeca M.P."/>
            <person name="Renner D."/>
            <person name="Rochette J."/>
            <person name="Rudolf G."/>
            <person name="Saiki S."/>
            <person name="Soong B.W."/>
            <person name="Swoboda K.J."/>
            <person name="Tucker S."/>
            <person name="Wood N."/>
            <person name="Hanna M."/>
            <person name="Bowcock A.M."/>
            <person name="Szepetowski P."/>
            <person name="Fu Y.H."/>
            <person name="Ptacek L.J."/>
        </authorList>
    </citation>
    <scope>INTERACTION WITH PRRT2</scope>
</reference>
<reference key="24">
    <citation type="journal article" date="2013" name="J. Biol. Chem.">
        <title>PRIP (phospholipase C-related but catalytically inactive protein) inhibits exocytosis by direct interactions with syntaxin 1 and SNAP-25 through its C2 domain.</title>
        <authorList>
            <person name="Zhang Z."/>
            <person name="Takeuchi H."/>
            <person name="Gao J."/>
            <person name="Wang D."/>
            <person name="James D.J."/>
            <person name="Martin T.F."/>
            <person name="Hirata M."/>
        </authorList>
    </citation>
    <scope>INTERACTION WITH PLCL1</scope>
</reference>
<reference key="25">
    <citation type="journal article" date="2014" name="Mol. Biol. Cell">
        <title>The Golgi S-acylation machinery comprises zDHHC enzymes with major differences in substrate affinity and S-acylation activity.</title>
        <authorList>
            <person name="Lemonidis K."/>
            <person name="Gorleku O.A."/>
            <person name="Sanchez-Perez M.C."/>
            <person name="Grefen C."/>
            <person name="Chamberlain L.H."/>
        </authorList>
    </citation>
    <scope>INTERACTION WITH ZDHHC17 AND ZDHHC13</scope>
</reference>
<reference key="26">
    <citation type="journal article" date="2015" name="J. Biol. Chem.">
        <title>Identification of a novel sequence motif recognized by the ankyrin repeat domain of zDHHC17/13 S-acyltransferases.</title>
        <authorList>
            <person name="Lemonidis K."/>
            <person name="Sanchez-Perez M.C."/>
            <person name="Chamberlain L.H."/>
        </authorList>
    </citation>
    <scope>INTERACTION WITH ZDHHC17 AND ZDHHC13</scope>
</reference>
<reference key="27">
    <citation type="journal article" date="2015" name="PLoS ONE">
        <title>SNAREs Interact with Retinal Degeneration Slow and Rod Outer Segment Membrane Protein-1 during Conventional and Unconventional Outer Segment Targeting.</title>
        <authorList>
            <person name="Zulliger R."/>
            <person name="Conley S.M."/>
            <person name="Mwoyosvi M.L."/>
            <person name="Stuck M.W."/>
            <person name="Azadi S."/>
            <person name="Naash M.I."/>
        </authorList>
    </citation>
    <scope>INTERACTION WITH PRPH2; ROM1 AND STX3</scope>
    <scope>SUBCELLULAR LOCATION</scope>
    <scope>TISSUE SPECIFICITY</scope>
</reference>
<reference key="28">
    <citation type="journal article" date="2016" name="Cell Rep.">
        <title>PRRT2 Is a Key Component of the Ca(2+)-Dependent Neurotransmitter Release Machinery.</title>
        <authorList>
            <person name="Valente P."/>
            <person name="Castroflorio E."/>
            <person name="Rossi P."/>
            <person name="Fadda M."/>
            <person name="Sterlini B."/>
            <person name="Cervigni R.I."/>
            <person name="Prestigio C."/>
            <person name="Giovedi S."/>
            <person name="Onofri F."/>
            <person name="Mura E."/>
            <person name="Guarnieri F.C."/>
            <person name="Marte A."/>
            <person name="Orlando M."/>
            <person name="Zara F."/>
            <person name="Fassio A."/>
            <person name="Valtorta F."/>
            <person name="Baldelli P."/>
            <person name="Corradi A."/>
            <person name="Benfenati F."/>
        </authorList>
    </citation>
    <scope>INTERACTION WITH PRRT2</scope>
</reference>
<reference key="29">
    <citation type="journal article" date="2017" name="J. Neurosci.">
        <title>UNC-18 and Tomosyn Antagonistically Control Synaptic Vesicle Priming Downstream of UNC-13 in Caenorhabditis elegans.</title>
        <authorList>
            <person name="Park S."/>
            <person name="Bin N.R."/>
            <person name="Yu B."/>
            <person name="Wong R."/>
            <person name="Sitarska E."/>
            <person name="Sugita K."/>
            <person name="Ma K."/>
            <person name="Xu J."/>
            <person name="Tien C.W."/>
            <person name="Algouneh A."/>
            <person name="Turlova E."/>
            <person name="Wang S."/>
            <person name="Siriya P."/>
            <person name="Shahid W."/>
            <person name="Kalia L."/>
            <person name="Feng Z.P."/>
            <person name="Monnier P.P."/>
            <person name="Sun H.S."/>
            <person name="Zhen M."/>
            <person name="Gao S."/>
            <person name="Rizo J."/>
            <person name="Sugita S."/>
        </authorList>
    </citation>
    <scope>IDENTIFICATION IN SNARE COMPLEX</scope>
</reference>
<reference key="30">
    <citation type="journal article" date="2018" name="Cell Res.">
        <title>PRRT2 deficiency induces paroxysmal kinesigenic dyskinesia by regulating synaptic transmission in cerebellum.</title>
        <authorList>
            <person name="Tan G.H."/>
            <person name="Liu Y.Y."/>
            <person name="Wang L."/>
            <person name="Li K."/>
            <person name="Zhang Z.Q."/>
            <person name="Li H.F."/>
            <person name="Yang Z.F."/>
            <person name="Li Y."/>
            <person name="Li D."/>
            <person name="Wu M.Y."/>
            <person name="Yu C.L."/>
            <person name="Long J.J."/>
            <person name="Chen R.C."/>
            <person name="Li L.X."/>
            <person name="Yin L.P."/>
            <person name="Liu J.W."/>
            <person name="Cheng X.W."/>
            <person name="Shen Q."/>
            <person name="Shu Y.S."/>
            <person name="Sakimura K."/>
            <person name="Liao L.J."/>
            <person name="Wu Z.Y."/>
            <person name="Xiong Z.Q."/>
        </authorList>
    </citation>
    <scope>INTERACTION WITH PRRT2</scope>
</reference>
<reference key="31">
    <citation type="journal article" date="1998" name="Nat. Struct. Biol.">
        <title>The synaptic SNARE complex is a parallel four-stranded helical bundle.</title>
        <authorList>
            <person name="Poirier M.A."/>
            <person name="Xiao W."/>
            <person name="Macosko J.C."/>
            <person name="Chan C."/>
            <person name="Shin Y.K."/>
            <person name="Bennett M.K."/>
        </authorList>
    </citation>
    <scope>3D-STRUCTURE MODELING OF 18-206 IN COMPLEX WITH VAMP2 AND STX1A</scope>
</reference>
<keyword id="KW-0025">Alternative splicing</keyword>
<keyword id="KW-1003">Cell membrane</keyword>
<keyword id="KW-0175">Coiled coil</keyword>
<keyword id="KW-0963">Cytoplasm</keyword>
<keyword id="KW-0903">Direct protein sequencing</keyword>
<keyword id="KW-0449">Lipoprotein</keyword>
<keyword id="KW-0472">Membrane</keyword>
<keyword id="KW-0564">Palmitate</keyword>
<keyword id="KW-0597">Phosphoprotein</keyword>
<keyword id="KW-1185">Reference proteome</keyword>
<keyword id="KW-0677">Repeat</keyword>
<keyword id="KW-0770">Synapse</keyword>
<keyword id="KW-0771">Synaptosome</keyword>
<evidence type="ECO:0000250" key="1">
    <source>
        <dbReference type="UniProtKB" id="P60880"/>
    </source>
</evidence>
<evidence type="ECO:0000250" key="2">
    <source>
        <dbReference type="UniProtKB" id="P60881"/>
    </source>
</evidence>
<evidence type="ECO:0000255" key="3">
    <source>
        <dbReference type="PROSITE-ProRule" id="PRU00202"/>
    </source>
</evidence>
<evidence type="ECO:0000256" key="4">
    <source>
        <dbReference type="SAM" id="MobiDB-lite"/>
    </source>
</evidence>
<evidence type="ECO:0000269" key="5">
    <source>
    </source>
</evidence>
<evidence type="ECO:0000269" key="6">
    <source>
    </source>
</evidence>
<evidence type="ECO:0000269" key="7">
    <source>
    </source>
</evidence>
<evidence type="ECO:0000269" key="8">
    <source>
    </source>
</evidence>
<evidence type="ECO:0000269" key="9">
    <source>
    </source>
</evidence>
<evidence type="ECO:0000269" key="10">
    <source>
    </source>
</evidence>
<evidence type="ECO:0000269" key="11">
    <source>
    </source>
</evidence>
<evidence type="ECO:0000269" key="12">
    <source>
    </source>
</evidence>
<evidence type="ECO:0000269" key="13">
    <source>
    </source>
</evidence>
<evidence type="ECO:0000269" key="14">
    <source>
    </source>
</evidence>
<evidence type="ECO:0000269" key="15">
    <source>
    </source>
</evidence>
<evidence type="ECO:0000269" key="16">
    <source>
    </source>
</evidence>
<evidence type="ECO:0000269" key="17">
    <source>
    </source>
</evidence>
<evidence type="ECO:0000269" key="18">
    <source>
    </source>
</evidence>
<evidence type="ECO:0000269" key="19">
    <source>
    </source>
</evidence>
<evidence type="ECO:0000269" key="20">
    <source>
    </source>
</evidence>
<evidence type="ECO:0000269" key="21">
    <source>
    </source>
</evidence>
<evidence type="ECO:0000269" key="22">
    <source>
    </source>
</evidence>
<evidence type="ECO:0000269" key="23">
    <source>
    </source>
</evidence>
<evidence type="ECO:0000269" key="24">
    <source>
    </source>
</evidence>
<evidence type="ECO:0000269" key="25">
    <source>
    </source>
</evidence>
<evidence type="ECO:0000269" key="26">
    <source>
    </source>
</evidence>
<evidence type="ECO:0000303" key="27">
    <source>
    </source>
</evidence>
<evidence type="ECO:0000303" key="28">
    <source>
    </source>
</evidence>
<evidence type="ECO:0000303" key="29">
    <source>
    </source>
</evidence>
<evidence type="ECO:0000305" key="30"/>
<evidence type="ECO:0000305" key="31">
    <source>
    </source>
</evidence>
<evidence type="ECO:0000305" key="32">
    <source>
    </source>
</evidence>
<evidence type="ECO:0000305" key="33">
    <source>
    </source>
</evidence>
<evidence type="ECO:0007744" key="34">
    <source>
    </source>
</evidence>
<organism>
    <name type="scientific">Mus musculus</name>
    <name type="common">Mouse</name>
    <dbReference type="NCBI Taxonomy" id="10090"/>
    <lineage>
        <taxon>Eukaryota</taxon>
        <taxon>Metazoa</taxon>
        <taxon>Chordata</taxon>
        <taxon>Craniata</taxon>
        <taxon>Vertebrata</taxon>
        <taxon>Euteleostomi</taxon>
        <taxon>Mammalia</taxon>
        <taxon>Eutheria</taxon>
        <taxon>Euarchontoglires</taxon>
        <taxon>Glires</taxon>
        <taxon>Rodentia</taxon>
        <taxon>Myomorpha</taxon>
        <taxon>Muroidea</taxon>
        <taxon>Muridae</taxon>
        <taxon>Murinae</taxon>
        <taxon>Mus</taxon>
        <taxon>Mus</taxon>
    </lineage>
</organism>
<comment type="function">
    <text evidence="2 9 32 33">t-SNARE involved in the molecular regulation of neurotransmitter release (PubMed:8103915, PubMed:8243676). May play an important role in the synaptic function of specific neuronal systems. Associates with proteins involved in vesicle docking and membrane fusion. Regulates plasma membrane recycling through its interaction with CENPF (PubMed:16672379). Modulates the gating characteristics of the delayed rectifier voltage-dependent potassium channel KCNB1 in pancreatic beta cells (By similarity).</text>
</comment>
<comment type="subunit">
    <text evidence="2 5 8 9 10 11 12 13 14 15 16 17 18 20 21 22 23 26">Part of the SNARE core complex containing SNAP25, VAMP2 and STX1A; this complex constitutes the basic catalytic machinery of the complex neurotransmitter release apparatus (PubMed:19196426, PubMed:28821673). Recruited to the SNARE complex following binding of the SNARE complex component STX1A to STXBP1 (PubMed:28821673). This complex binds CPLX1 (PubMed:19196426). Found in a complex containing SYT1, SV2B and STX1A (PubMed:15466855). Found in a ternary complex with STX1A and VAMP8 (PubMed:9731768). Interacts with HSC70 and with SYT9, forming a complex with DNAJC5 (PubMed:20847230). The interaction with SYT9 is inhibited in presence of calcium (PubMed:20847230). Isoform 1 and isoform 2 interact with BLOC1S6 (PubMed:19546860). Interacts with CENPF (PubMed:16672379). Interacts with EQTN (PubMed:19285662). Interacts with HGS (By similarity). Interacts with KCNB1 (via N-terminus); reduces the voltage-dependent potassium channel KCNB1 activity in pancreatic beta cells (By similarity). Interacts with OTOF (PubMed:17055430). Interacts with RIMS1 (By similarity). Interacts with SNAPIN (PubMed:10195194). Interacts with STXBP6 (By similarity). Interacts with TRIM9 (By similarity). Interacts with ZDHHC13 (via ANK repeats) (PubMed:25253725). Interacts with ZDHHC17 (via ANK repeats) (PubMed:25253725). Associates with the BLOC-1 complex (PubMed:19546860). Interacts with PLCL1 (via C2 domain) (PubMed:23341457). Interacts with PRRT2; this interaction may impair the formation of the SNARE complex (PubMed:22832103, PubMed:27052163, PubMed:29056747). Interacts with alpha-synuclein/SNCA (PubMed:20798282). Interacts with PRPH2 (PubMed:26406599). Interacts with ROM1 (PubMed:26406599). Interacts with STX3 isoform 3B (PubMed:26406599).</text>
</comment>
<comment type="interaction">
    <interactant intactId="EBI-445270">
        <id>P60879</id>
    </interactant>
    <interactant intactId="EBI-2211248">
        <id>Q155P7</id>
        <label>Cenpf</label>
    </interactant>
    <organismsDiffer>false</organismsDiffer>
    <experiments>13</experiments>
</comment>
<comment type="interaction">
    <interactant intactId="EBI-445270">
        <id>P60879</id>
    </interactant>
    <interactant intactId="EBI-400878">
        <id>O35526</id>
        <label>Stx1a</label>
    </interactant>
    <organismsDiffer>false</organismsDiffer>
    <experiments>4</experiments>
</comment>
<comment type="interaction">
    <interactant intactId="EBI-445270">
        <id>P60879</id>
    </interactant>
    <interactant intactId="EBI-521920">
        <id>P63044</id>
        <label>Vamp2</label>
    </interactant>
    <organismsDiffer>false</organismsDiffer>
    <experiments>18</experiments>
</comment>
<comment type="interaction">
    <interactant intactId="EBI-445270">
        <id>P60879</id>
    </interactant>
    <interactant intactId="EBI-539720">
        <id>P32851</id>
        <label>Stx1a</label>
    </interactant>
    <organismsDiffer>true</organismsDiffer>
    <experiments>7</experiments>
</comment>
<comment type="subcellular location">
    <subcellularLocation>
        <location evidence="9">Cytoplasm</location>
        <location evidence="9">Perinuclear region</location>
    </subcellularLocation>
    <subcellularLocation>
        <location evidence="6 25">Cell membrane</location>
        <topology evidence="25">Lipid-anchor</topology>
    </subcellularLocation>
    <subcellularLocation>
        <location evidence="19">Synapse</location>
        <location evidence="19">Synaptosome</location>
    </subcellularLocation>
    <subcellularLocation>
        <location evidence="20">Photoreceptor inner segment</location>
    </subcellularLocation>
    <text evidence="2 9 25">Membrane association requires palmitoylation (PubMed:9349529). Expressed throughout cytoplasm, concentrating at the perinuclear region (PubMed:16672379). Colocalizes with KCNB1 at the cell membrane (By similarity). Colocalizes with PLCL1 at the cell membrane (By similarity).</text>
</comment>
<comment type="alternative products">
    <event type="alternative splicing"/>
    <isoform>
        <id>P60879-1</id>
        <id>P13795-1</id>
        <name>1</name>
        <name>SNAP-25b</name>
        <sequence type="displayed"/>
    </isoform>
    <isoform>
        <id>P60879-2</id>
        <id>P13795-2</id>
        <name>2</name>
        <name>SNAP-25a</name>
        <sequence type="described" ref="VSP_010019"/>
    </isoform>
    <text>Isoforms differ by the usage of two alternative homologous exons (5a and 5b) which code for positions 56 to 94 and differ only in 9 positions out of 39.</text>
</comment>
<comment type="tissue specificity">
    <text evidence="20">Expressed in the outer nuclear layer of the retina (at protein level).</text>
</comment>
<comment type="PTM">
    <text evidence="25">Palmitoylated. Cys-85 appears to be the main site, and palmitoylation is required for membrane association.</text>
</comment>
<comment type="PTM">
    <text evidence="24 31 32">(Microbial infection) Targeted and hydrolyzed by C.botulinum neurotoxin type A (BoNT/A, botA) which hydrolyzes the 197-Gln-|-Arg-198 bond and inhibits neurotransmitter release (PubMed:8103915, PubMed:8243676).</text>
</comment>
<comment type="PTM">
    <text evidence="24 31 32">(Microbial infection) Targeted and hydrolyzed by C.botulinum neurotoxin type E (BoNT/E) which hydrolyzes the 180-Arg-|-Ile-181 bond and inhibits neurotransmitter release (PubMed:8103915, PubMed:8243676).</text>
</comment>
<comment type="similarity">
    <text evidence="30">Belongs to the SNAP-25 family.</text>
</comment>
<gene>
    <name type="primary">Snap25</name>
    <name type="synonym">Snap</name>
</gene>
<protein>
    <recommendedName>
        <fullName>Synaptosomal-associated protein 25</fullName>
        <shortName>SNAP-25</shortName>
    </recommendedName>
    <alternativeName>
        <fullName>Super protein</fullName>
        <shortName>SUP</shortName>
    </alternativeName>
    <alternativeName>
        <fullName>Synaptosomal-associated 25 kDa protein</fullName>
    </alternativeName>
</protein>
<name>SNP25_MOUSE</name>
<dbReference type="EMBL" id="M22012">
    <property type="protein sequence ID" value="AAA61741.1"/>
    <property type="molecule type" value="mRNA"/>
</dbReference>
<dbReference type="EMBL" id="AF483516">
    <property type="protein sequence ID" value="AAL90790.1"/>
    <property type="molecule type" value="mRNA"/>
</dbReference>
<dbReference type="EMBL" id="AF483517">
    <property type="protein sequence ID" value="AAL90791.1"/>
    <property type="molecule type" value="mRNA"/>
</dbReference>
<dbReference type="EMBL" id="AK078038">
    <property type="protein sequence ID" value="BAC37105.1"/>
    <property type="molecule type" value="mRNA"/>
</dbReference>
<dbReference type="EMBL" id="AL732447">
    <property type="status" value="NOT_ANNOTATED_CDS"/>
    <property type="molecule type" value="Genomic_DNA"/>
</dbReference>
<dbReference type="EMBL" id="CH466519">
    <property type="protein sequence ID" value="EDL28390.1"/>
    <property type="molecule type" value="Genomic_DNA"/>
</dbReference>
<dbReference type="EMBL" id="BC018249">
    <property type="protein sequence ID" value="AAH18249.1"/>
    <property type="molecule type" value="mRNA"/>
</dbReference>
<dbReference type="CCDS" id="CCDS16793.1"/>
<dbReference type="CCDS" id="CCDS71153.1">
    <molecule id="P60879-2"/>
</dbReference>
<dbReference type="PIR" id="A33623">
    <property type="entry name" value="A33623"/>
</dbReference>
<dbReference type="RefSeq" id="NP_001277985.1">
    <molecule id="P60879-2"/>
    <property type="nucleotide sequence ID" value="NM_001291056.2"/>
</dbReference>
<dbReference type="RefSeq" id="NP_001342183.1">
    <molecule id="P60879-1"/>
    <property type="nucleotide sequence ID" value="NM_001355254.1"/>
</dbReference>
<dbReference type="RefSeq" id="NP_001399544.1">
    <molecule id="P60879-1"/>
    <property type="nucleotide sequence ID" value="NM_001412615.1"/>
</dbReference>
<dbReference type="RefSeq" id="NP_001399545.1">
    <molecule id="P60879-1"/>
    <property type="nucleotide sequence ID" value="NM_001412616.1"/>
</dbReference>
<dbReference type="RefSeq" id="NP_001399546.1">
    <molecule id="P60879-2"/>
    <property type="nucleotide sequence ID" value="NM_001412617.1"/>
</dbReference>
<dbReference type="RefSeq" id="NP_035558.1">
    <molecule id="P60879-1"/>
    <property type="nucleotide sequence ID" value="NM_011428.4"/>
</dbReference>
<dbReference type="RefSeq" id="XP_017172247.1">
    <property type="nucleotide sequence ID" value="XM_017316758.1"/>
</dbReference>
<dbReference type="RefSeq" id="XP_017172249.1">
    <property type="nucleotide sequence ID" value="XM_017316760.1"/>
</dbReference>
<dbReference type="BMRB" id="P60879"/>
<dbReference type="SMR" id="P60879"/>
<dbReference type="BioGRID" id="203362">
    <property type="interactions" value="83"/>
</dbReference>
<dbReference type="CORUM" id="P60879"/>
<dbReference type="DIP" id="DIP-29066N"/>
<dbReference type="FunCoup" id="P60879">
    <property type="interactions" value="482"/>
</dbReference>
<dbReference type="IntAct" id="P60879">
    <property type="interactions" value="44"/>
</dbReference>
<dbReference type="MINT" id="P60879"/>
<dbReference type="STRING" id="10090.ENSMUSP00000028727"/>
<dbReference type="TCDB" id="1.F.1.1.4">
    <property type="family name" value="the synaptosomal vesicle fusion pore (svf-pore) family"/>
</dbReference>
<dbReference type="GlyGen" id="P60879">
    <property type="glycosylation" value="3 sites, 1 O-linked glycan (3 sites)"/>
</dbReference>
<dbReference type="iPTMnet" id="P60879"/>
<dbReference type="PhosphoSitePlus" id="P60879"/>
<dbReference type="SwissPalm" id="P60879"/>
<dbReference type="jPOST" id="P60879"/>
<dbReference type="PaxDb" id="10090-ENSMUSP00000028727"/>
<dbReference type="PeptideAtlas" id="P60879"/>
<dbReference type="ProteomicsDB" id="257537"/>
<dbReference type="ProteomicsDB" id="257538">
    <molecule id="P60879-2"/>
</dbReference>
<dbReference type="Pumba" id="P60879"/>
<dbReference type="Antibodypedia" id="713">
    <property type="antibodies" value="1205 antibodies from 47 providers"/>
</dbReference>
<dbReference type="DNASU" id="20614"/>
<dbReference type="Ensembl" id="ENSMUST00000028727.11">
    <molecule id="P60879-1"/>
    <property type="protein sequence ID" value="ENSMUSP00000028727.5"/>
    <property type="gene ID" value="ENSMUSG00000027273.14"/>
</dbReference>
<dbReference type="Ensembl" id="ENSMUST00000110098.4">
    <molecule id="P60879-2"/>
    <property type="protein sequence ID" value="ENSMUSP00000105725.4"/>
    <property type="gene ID" value="ENSMUSG00000027273.14"/>
</dbReference>
<dbReference type="GeneID" id="20614"/>
<dbReference type="KEGG" id="mmu:20614"/>
<dbReference type="UCSC" id="uc008mop.1">
    <property type="organism name" value="mouse"/>
</dbReference>
<dbReference type="UCSC" id="uc056zpt.1">
    <molecule id="P60879-2"/>
    <property type="organism name" value="mouse"/>
</dbReference>
<dbReference type="AGR" id="MGI:98331"/>
<dbReference type="CTD" id="6616"/>
<dbReference type="MGI" id="MGI:98331">
    <property type="gene designation" value="Snap25"/>
</dbReference>
<dbReference type="VEuPathDB" id="HostDB:ENSMUSG00000027273"/>
<dbReference type="eggNOG" id="KOG3065">
    <property type="taxonomic scope" value="Eukaryota"/>
</dbReference>
<dbReference type="GeneTree" id="ENSGT00950000182843"/>
<dbReference type="HOGENOM" id="CLU_096939_0_0_1"/>
<dbReference type="InParanoid" id="P60879"/>
<dbReference type="OMA" id="GMIQINE"/>
<dbReference type="OrthoDB" id="19261at2759"/>
<dbReference type="PhylomeDB" id="P60879"/>
<dbReference type="TreeFam" id="TF315125"/>
<dbReference type="Reactome" id="R-MMU-181429">
    <property type="pathway name" value="Serotonin Neurotransmitter Release Cycle"/>
</dbReference>
<dbReference type="Reactome" id="R-MMU-181430">
    <property type="pathway name" value="Norepinephrine Neurotransmitter Release Cycle"/>
</dbReference>
<dbReference type="Reactome" id="R-MMU-210500">
    <property type="pathway name" value="Glutamate Neurotransmitter Release Cycle"/>
</dbReference>
<dbReference type="Reactome" id="R-MMU-212676">
    <property type="pathway name" value="Dopamine Neurotransmitter Release Cycle"/>
</dbReference>
<dbReference type="Reactome" id="R-MMU-264642">
    <property type="pathway name" value="Acetylcholine Neurotransmitter Release Cycle"/>
</dbReference>
<dbReference type="Reactome" id="R-MMU-449836">
    <property type="pathway name" value="Other interleukin signaling"/>
</dbReference>
<dbReference type="Reactome" id="R-MMU-6798695">
    <property type="pathway name" value="Neutrophil degranulation"/>
</dbReference>
<dbReference type="Reactome" id="R-MMU-888590">
    <property type="pathway name" value="GABA synthesis, release, reuptake and degradation"/>
</dbReference>
<dbReference type="BioGRID-ORCS" id="20614">
    <property type="hits" value="3 hits in 76 CRISPR screens"/>
</dbReference>
<dbReference type="ChiTaRS" id="Snap25">
    <property type="organism name" value="mouse"/>
</dbReference>
<dbReference type="PRO" id="PR:P60879"/>
<dbReference type="Proteomes" id="UP000000589">
    <property type="component" value="Chromosome 2"/>
</dbReference>
<dbReference type="RNAct" id="P60879">
    <property type="molecule type" value="protein"/>
</dbReference>
<dbReference type="Bgee" id="ENSMUSG00000027273">
    <property type="expression patterns" value="Expressed in retrosplenial region and 161 other cell types or tissues"/>
</dbReference>
<dbReference type="GO" id="GO:0030424">
    <property type="term" value="C:axon"/>
    <property type="evidence" value="ECO:0000314"/>
    <property type="project" value="ParkinsonsUK-UCL"/>
</dbReference>
<dbReference type="GO" id="GO:0044295">
    <property type="term" value="C:axonal growth cone"/>
    <property type="evidence" value="ECO:0000266"/>
    <property type="project" value="MGI"/>
</dbReference>
<dbReference type="GO" id="GO:0031083">
    <property type="term" value="C:BLOC-1 complex"/>
    <property type="evidence" value="ECO:0007669"/>
    <property type="project" value="Ensembl"/>
</dbReference>
<dbReference type="GO" id="GO:0005938">
    <property type="term" value="C:cell cortex"/>
    <property type="evidence" value="ECO:0000314"/>
    <property type="project" value="SynGO-UCL"/>
</dbReference>
<dbReference type="GO" id="GO:0005737">
    <property type="term" value="C:cytoplasm"/>
    <property type="evidence" value="ECO:0000314"/>
    <property type="project" value="UniProtKB"/>
</dbReference>
<dbReference type="GO" id="GO:0005856">
    <property type="term" value="C:cytoskeleton"/>
    <property type="evidence" value="ECO:0007669"/>
    <property type="project" value="Ensembl"/>
</dbReference>
<dbReference type="GO" id="GO:0098978">
    <property type="term" value="C:glutamatergic synapse"/>
    <property type="evidence" value="ECO:0000314"/>
    <property type="project" value="SynGO"/>
</dbReference>
<dbReference type="GO" id="GO:0016020">
    <property type="term" value="C:membrane"/>
    <property type="evidence" value="ECO:0000314"/>
    <property type="project" value="UniProtKB"/>
</dbReference>
<dbReference type="GO" id="GO:0043209">
    <property type="term" value="C:myelin sheath"/>
    <property type="evidence" value="ECO:0007005"/>
    <property type="project" value="UniProtKB"/>
</dbReference>
<dbReference type="GO" id="GO:0043005">
    <property type="term" value="C:neuron projection"/>
    <property type="evidence" value="ECO:0000314"/>
    <property type="project" value="MGI"/>
</dbReference>
<dbReference type="GO" id="GO:0048471">
    <property type="term" value="C:perinuclear region of cytoplasm"/>
    <property type="evidence" value="ECO:0000314"/>
    <property type="project" value="UniProtKB"/>
</dbReference>
<dbReference type="GO" id="GO:0001917">
    <property type="term" value="C:photoreceptor inner segment"/>
    <property type="evidence" value="ECO:0007669"/>
    <property type="project" value="UniProtKB-SubCell"/>
</dbReference>
<dbReference type="GO" id="GO:0005886">
    <property type="term" value="C:plasma membrane"/>
    <property type="evidence" value="ECO:0000304"/>
    <property type="project" value="MGI"/>
</dbReference>
<dbReference type="GO" id="GO:0042734">
    <property type="term" value="C:presynaptic membrane"/>
    <property type="evidence" value="ECO:0000314"/>
    <property type="project" value="MGI"/>
</dbReference>
<dbReference type="GO" id="GO:0097470">
    <property type="term" value="C:ribbon synapse"/>
    <property type="evidence" value="ECO:0000314"/>
    <property type="project" value="MGI"/>
</dbReference>
<dbReference type="GO" id="GO:0031201">
    <property type="term" value="C:SNARE complex"/>
    <property type="evidence" value="ECO:0000250"/>
    <property type="project" value="UniProtKB"/>
</dbReference>
<dbReference type="GO" id="GO:0036477">
    <property type="term" value="C:somatodendritic compartment"/>
    <property type="evidence" value="ECO:0000314"/>
    <property type="project" value="ParkinsonsUK-UCL"/>
</dbReference>
<dbReference type="GO" id="GO:0045202">
    <property type="term" value="C:synapse"/>
    <property type="evidence" value="ECO:0000314"/>
    <property type="project" value="MGI"/>
</dbReference>
<dbReference type="GO" id="GO:0008021">
    <property type="term" value="C:synaptic vesicle"/>
    <property type="evidence" value="ECO:0000314"/>
    <property type="project" value="MGI"/>
</dbReference>
<dbReference type="GO" id="GO:0070044">
    <property type="term" value="C:synaptobrevin 2-SNAP-25-syntaxin-1a complex"/>
    <property type="evidence" value="ECO:0000266"/>
    <property type="project" value="MGI"/>
</dbReference>
<dbReference type="GO" id="GO:0070032">
    <property type="term" value="C:synaptobrevin 2-SNAP-25-syntaxin-1a-complexin I complex"/>
    <property type="evidence" value="ECO:0000314"/>
    <property type="project" value="MGI"/>
</dbReference>
<dbReference type="GO" id="GO:0005802">
    <property type="term" value="C:trans-Golgi network"/>
    <property type="evidence" value="ECO:0000314"/>
    <property type="project" value="UniProtKB"/>
</dbReference>
<dbReference type="GO" id="GO:0048306">
    <property type="term" value="F:calcium-dependent protein binding"/>
    <property type="evidence" value="ECO:0000250"/>
    <property type="project" value="ParkinsonsUK-UCL"/>
</dbReference>
<dbReference type="GO" id="GO:0005484">
    <property type="term" value="F:SNAP receptor activity"/>
    <property type="evidence" value="ECO:0000314"/>
    <property type="project" value="MGI"/>
</dbReference>
<dbReference type="GO" id="GO:0000149">
    <property type="term" value="F:SNARE binding"/>
    <property type="evidence" value="ECO:0000314"/>
    <property type="project" value="MGI"/>
</dbReference>
<dbReference type="GO" id="GO:0017075">
    <property type="term" value="F:syntaxin-1 binding"/>
    <property type="evidence" value="ECO:0000314"/>
    <property type="project" value="ParkinsonsUK-UCL"/>
</dbReference>
<dbReference type="GO" id="GO:0005249">
    <property type="term" value="F:voltage-gated potassium channel activity"/>
    <property type="evidence" value="ECO:0007669"/>
    <property type="project" value="InterPro"/>
</dbReference>
<dbReference type="GO" id="GO:0008306">
    <property type="term" value="P:associative learning"/>
    <property type="evidence" value="ECO:0000315"/>
    <property type="project" value="MGI"/>
</dbReference>
<dbReference type="GO" id="GO:0051649">
    <property type="term" value="P:establishment of localization in cell"/>
    <property type="evidence" value="ECO:0000266"/>
    <property type="project" value="MGI"/>
</dbReference>
<dbReference type="GO" id="GO:0030073">
    <property type="term" value="P:insulin secretion"/>
    <property type="evidence" value="ECO:0000266"/>
    <property type="project" value="MGI"/>
</dbReference>
<dbReference type="GO" id="GO:0007626">
    <property type="term" value="P:locomotory behavior"/>
    <property type="evidence" value="ECO:0000315"/>
    <property type="project" value="MGI"/>
</dbReference>
<dbReference type="GO" id="GO:0060291">
    <property type="term" value="P:long-term synaptic potentiation"/>
    <property type="evidence" value="ECO:0000315"/>
    <property type="project" value="MGI"/>
</dbReference>
<dbReference type="GO" id="GO:0007269">
    <property type="term" value="P:neurotransmitter secretion"/>
    <property type="evidence" value="ECO:0000315"/>
    <property type="project" value="MGI"/>
</dbReference>
<dbReference type="GO" id="GO:0031915">
    <property type="term" value="P:positive regulation of synaptic plasticity"/>
    <property type="evidence" value="ECO:0000269"/>
    <property type="project" value="MGI"/>
</dbReference>
<dbReference type="GO" id="GO:0099525">
    <property type="term" value="P:presynaptic dense core vesicle exocytosis"/>
    <property type="evidence" value="ECO:0000314"/>
    <property type="project" value="SynGO"/>
</dbReference>
<dbReference type="GO" id="GO:0070201">
    <property type="term" value="P:regulation of establishment of protein localization"/>
    <property type="evidence" value="ECO:0000315"/>
    <property type="project" value="MGI"/>
</dbReference>
<dbReference type="GO" id="GO:0010975">
    <property type="term" value="P:regulation of neuron projection development"/>
    <property type="evidence" value="ECO:0000316"/>
    <property type="project" value="ParkinsonsUK-UCL"/>
</dbReference>
<dbReference type="GO" id="GO:1990926">
    <property type="term" value="P:short-term synaptic potentiation"/>
    <property type="evidence" value="ECO:0000269"/>
    <property type="project" value="MGI"/>
</dbReference>
<dbReference type="GO" id="GO:0016079">
    <property type="term" value="P:synaptic vesicle exocytosis"/>
    <property type="evidence" value="ECO:0000314"/>
    <property type="project" value="SynGO"/>
</dbReference>
<dbReference type="CDD" id="cd15885">
    <property type="entry name" value="SNARE_SNAP25C"/>
    <property type="match status" value="1"/>
</dbReference>
<dbReference type="CDD" id="cd15894">
    <property type="entry name" value="SNARE_SNAP25N"/>
    <property type="match status" value="1"/>
</dbReference>
<dbReference type="FunFam" id="1.20.5.110:FF:000007">
    <property type="entry name" value="Synaptosomal-associated protein"/>
    <property type="match status" value="1"/>
</dbReference>
<dbReference type="FunFam" id="1.20.5.110:FF:000009">
    <property type="entry name" value="Synaptosomal-associated protein"/>
    <property type="match status" value="1"/>
</dbReference>
<dbReference type="Gene3D" id="1.20.5.110">
    <property type="match status" value="2"/>
</dbReference>
<dbReference type="InterPro" id="IPR000928">
    <property type="entry name" value="SNAP-25_dom"/>
</dbReference>
<dbReference type="InterPro" id="IPR039077">
    <property type="entry name" value="SNAP-25_N_SNARE_chord"/>
</dbReference>
<dbReference type="InterPro" id="IPR000727">
    <property type="entry name" value="T_SNARE_dom"/>
</dbReference>
<dbReference type="PANTHER" id="PTHR19305">
    <property type="entry name" value="SYNAPTOSOMAL ASSOCIATED PROTEIN"/>
    <property type="match status" value="1"/>
</dbReference>
<dbReference type="PANTHER" id="PTHR19305:SF5">
    <property type="entry name" value="SYNAPTOSOMAL-ASSOCIATED PROTEIN 25"/>
    <property type="match status" value="1"/>
</dbReference>
<dbReference type="Pfam" id="PF00835">
    <property type="entry name" value="SNAP-25"/>
    <property type="match status" value="1"/>
</dbReference>
<dbReference type="SMART" id="SM00397">
    <property type="entry name" value="t_SNARE"/>
    <property type="match status" value="2"/>
</dbReference>
<dbReference type="SUPFAM" id="SSF58038">
    <property type="entry name" value="SNARE fusion complex"/>
    <property type="match status" value="2"/>
</dbReference>
<dbReference type="PROSITE" id="PS50192">
    <property type="entry name" value="T_SNARE"/>
    <property type="match status" value="2"/>
</dbReference>
<proteinExistence type="evidence at protein level"/>